<name>RECO_BACCR</name>
<accession>Q818G3</accession>
<gene>
    <name evidence="1" type="primary">recO</name>
    <name type="ordered locus">BC_4295</name>
</gene>
<feature type="chain" id="PRO_0000204927" description="DNA repair protein RecO">
    <location>
        <begin position="1"/>
        <end position="248"/>
    </location>
</feature>
<keyword id="KW-0227">DNA damage</keyword>
<keyword id="KW-0233">DNA recombination</keyword>
<keyword id="KW-0234">DNA repair</keyword>
<keyword id="KW-1185">Reference proteome</keyword>
<protein>
    <recommendedName>
        <fullName evidence="1">DNA repair protein RecO</fullName>
    </recommendedName>
    <alternativeName>
        <fullName evidence="1">Recombination protein O</fullName>
    </alternativeName>
</protein>
<proteinExistence type="inferred from homology"/>
<dbReference type="EMBL" id="AE016877">
    <property type="protein sequence ID" value="AAP11208.1"/>
    <property type="molecule type" value="Genomic_DNA"/>
</dbReference>
<dbReference type="RefSeq" id="NP_834007.1">
    <property type="nucleotide sequence ID" value="NC_004722.1"/>
</dbReference>
<dbReference type="RefSeq" id="WP_000487015.1">
    <property type="nucleotide sequence ID" value="NZ_CP138336.1"/>
</dbReference>
<dbReference type="SMR" id="Q818G3"/>
<dbReference type="STRING" id="226900.BC_4295"/>
<dbReference type="KEGG" id="bce:BC4295"/>
<dbReference type="PATRIC" id="fig|226900.8.peg.4442"/>
<dbReference type="HOGENOM" id="CLU_066632_4_0_9"/>
<dbReference type="OrthoDB" id="9797083at2"/>
<dbReference type="Proteomes" id="UP000001417">
    <property type="component" value="Chromosome"/>
</dbReference>
<dbReference type="GO" id="GO:0043590">
    <property type="term" value="C:bacterial nucleoid"/>
    <property type="evidence" value="ECO:0000318"/>
    <property type="project" value="GO_Central"/>
</dbReference>
<dbReference type="GO" id="GO:0006310">
    <property type="term" value="P:DNA recombination"/>
    <property type="evidence" value="ECO:0007669"/>
    <property type="project" value="UniProtKB-UniRule"/>
</dbReference>
<dbReference type="GO" id="GO:0006302">
    <property type="term" value="P:double-strand break repair"/>
    <property type="evidence" value="ECO:0000318"/>
    <property type="project" value="GO_Central"/>
</dbReference>
<dbReference type="Gene3D" id="2.40.50.140">
    <property type="entry name" value="Nucleic acid-binding proteins"/>
    <property type="match status" value="1"/>
</dbReference>
<dbReference type="Gene3D" id="1.20.1440.120">
    <property type="entry name" value="Recombination protein O, C-terminal domain"/>
    <property type="match status" value="1"/>
</dbReference>
<dbReference type="HAMAP" id="MF_00201">
    <property type="entry name" value="RecO"/>
    <property type="match status" value="1"/>
</dbReference>
<dbReference type="InterPro" id="IPR037278">
    <property type="entry name" value="ARFGAP/RecO"/>
</dbReference>
<dbReference type="InterPro" id="IPR022572">
    <property type="entry name" value="DNA_rep/recomb_RecO_N"/>
</dbReference>
<dbReference type="InterPro" id="IPR012340">
    <property type="entry name" value="NA-bd_OB-fold"/>
</dbReference>
<dbReference type="InterPro" id="IPR003717">
    <property type="entry name" value="RecO"/>
</dbReference>
<dbReference type="InterPro" id="IPR042242">
    <property type="entry name" value="RecO_C"/>
</dbReference>
<dbReference type="NCBIfam" id="TIGR00613">
    <property type="entry name" value="reco"/>
    <property type="match status" value="1"/>
</dbReference>
<dbReference type="PANTHER" id="PTHR33991">
    <property type="entry name" value="DNA REPAIR PROTEIN RECO"/>
    <property type="match status" value="1"/>
</dbReference>
<dbReference type="PANTHER" id="PTHR33991:SF1">
    <property type="entry name" value="DNA REPAIR PROTEIN RECO"/>
    <property type="match status" value="1"/>
</dbReference>
<dbReference type="Pfam" id="PF02565">
    <property type="entry name" value="RecO_C"/>
    <property type="match status" value="1"/>
</dbReference>
<dbReference type="Pfam" id="PF11967">
    <property type="entry name" value="RecO_N"/>
    <property type="match status" value="1"/>
</dbReference>
<dbReference type="SUPFAM" id="SSF57863">
    <property type="entry name" value="ArfGap/RecO-like zinc finger"/>
    <property type="match status" value="1"/>
</dbReference>
<dbReference type="SUPFAM" id="SSF50249">
    <property type="entry name" value="Nucleic acid-binding proteins"/>
    <property type="match status" value="1"/>
</dbReference>
<organism>
    <name type="scientific">Bacillus cereus (strain ATCC 14579 / DSM 31 / CCUG 7414 / JCM 2152 / NBRC 15305 / NCIMB 9373 / NCTC 2599 / NRRL B-3711)</name>
    <dbReference type="NCBI Taxonomy" id="226900"/>
    <lineage>
        <taxon>Bacteria</taxon>
        <taxon>Bacillati</taxon>
        <taxon>Bacillota</taxon>
        <taxon>Bacilli</taxon>
        <taxon>Bacillales</taxon>
        <taxon>Bacillaceae</taxon>
        <taxon>Bacillus</taxon>
        <taxon>Bacillus cereus group</taxon>
    </lineage>
</organism>
<comment type="function">
    <text evidence="1">Involved in DNA repair and RecF pathway recombination.</text>
</comment>
<comment type="similarity">
    <text evidence="1">Belongs to the RecO family.</text>
</comment>
<sequence length="248" mass="28634">MFQKVEGIVIRTTDYGETNKIVTIFSRELGKVSAMARGSKKPKSRLASVSQLMTHGHFLIQMGSGLGTLQQGEIISTMKEIREDIFLTAYASFIVELTDKATEDKKHNPYLFEMLYQTLHYMCEGVDPEVLSLIYQTKMLPVLGMRPYFDTCAICHQETDFVAFSVREGGFLCSRHAEQDPYRIPVGEAVHKLLRLFFHFDLHRLGNVSVKDSTKKQMRLVLNTYYDEYCGIYLKSRRFLEQLDKFQI</sequence>
<reference key="1">
    <citation type="journal article" date="2003" name="Nature">
        <title>Genome sequence of Bacillus cereus and comparative analysis with Bacillus anthracis.</title>
        <authorList>
            <person name="Ivanova N."/>
            <person name="Sorokin A."/>
            <person name="Anderson I."/>
            <person name="Galleron N."/>
            <person name="Candelon B."/>
            <person name="Kapatral V."/>
            <person name="Bhattacharyya A."/>
            <person name="Reznik G."/>
            <person name="Mikhailova N."/>
            <person name="Lapidus A."/>
            <person name="Chu L."/>
            <person name="Mazur M."/>
            <person name="Goltsman E."/>
            <person name="Larsen N."/>
            <person name="D'Souza M."/>
            <person name="Walunas T."/>
            <person name="Grechkin Y."/>
            <person name="Pusch G."/>
            <person name="Haselkorn R."/>
            <person name="Fonstein M."/>
            <person name="Ehrlich S.D."/>
            <person name="Overbeek R."/>
            <person name="Kyrpides N.C."/>
        </authorList>
    </citation>
    <scope>NUCLEOTIDE SEQUENCE [LARGE SCALE GENOMIC DNA]</scope>
    <source>
        <strain>ATCC 14579 / DSM 31 / CCUG 7414 / JCM 2152 / NBRC 15305 / NCIMB 9373 / NCTC 2599 / NRRL B-3711</strain>
    </source>
</reference>
<evidence type="ECO:0000255" key="1">
    <source>
        <dbReference type="HAMAP-Rule" id="MF_00201"/>
    </source>
</evidence>